<dbReference type="EMBL" id="CP001071">
    <property type="protein sequence ID" value="ACD05059.1"/>
    <property type="molecule type" value="Genomic_DNA"/>
</dbReference>
<dbReference type="RefSeq" id="WP_012420274.1">
    <property type="nucleotide sequence ID" value="NZ_CP071807.1"/>
</dbReference>
<dbReference type="SMR" id="B2URH4"/>
<dbReference type="STRING" id="349741.Amuc_1234"/>
<dbReference type="PaxDb" id="349741-Amuc_1234"/>
<dbReference type="GeneID" id="60880755"/>
<dbReference type="KEGG" id="amu:Amuc_1234"/>
<dbReference type="eggNOG" id="COG0102">
    <property type="taxonomic scope" value="Bacteria"/>
</dbReference>
<dbReference type="HOGENOM" id="CLU_082184_2_2_0"/>
<dbReference type="OrthoDB" id="9801330at2"/>
<dbReference type="BioCyc" id="AMUC349741:G1GBX-1318-MONOMER"/>
<dbReference type="Proteomes" id="UP000001031">
    <property type="component" value="Chromosome"/>
</dbReference>
<dbReference type="GO" id="GO:0022625">
    <property type="term" value="C:cytosolic large ribosomal subunit"/>
    <property type="evidence" value="ECO:0007669"/>
    <property type="project" value="TreeGrafter"/>
</dbReference>
<dbReference type="GO" id="GO:0003729">
    <property type="term" value="F:mRNA binding"/>
    <property type="evidence" value="ECO:0007669"/>
    <property type="project" value="TreeGrafter"/>
</dbReference>
<dbReference type="GO" id="GO:0003735">
    <property type="term" value="F:structural constituent of ribosome"/>
    <property type="evidence" value="ECO:0007669"/>
    <property type="project" value="InterPro"/>
</dbReference>
<dbReference type="GO" id="GO:0017148">
    <property type="term" value="P:negative regulation of translation"/>
    <property type="evidence" value="ECO:0007669"/>
    <property type="project" value="TreeGrafter"/>
</dbReference>
<dbReference type="GO" id="GO:0006412">
    <property type="term" value="P:translation"/>
    <property type="evidence" value="ECO:0007669"/>
    <property type="project" value="UniProtKB-UniRule"/>
</dbReference>
<dbReference type="CDD" id="cd00392">
    <property type="entry name" value="Ribosomal_L13"/>
    <property type="match status" value="1"/>
</dbReference>
<dbReference type="FunFam" id="3.90.1180.10:FF:000001">
    <property type="entry name" value="50S ribosomal protein L13"/>
    <property type="match status" value="1"/>
</dbReference>
<dbReference type="Gene3D" id="3.90.1180.10">
    <property type="entry name" value="Ribosomal protein L13"/>
    <property type="match status" value="1"/>
</dbReference>
<dbReference type="HAMAP" id="MF_01366">
    <property type="entry name" value="Ribosomal_uL13"/>
    <property type="match status" value="1"/>
</dbReference>
<dbReference type="InterPro" id="IPR005822">
    <property type="entry name" value="Ribosomal_uL13"/>
</dbReference>
<dbReference type="InterPro" id="IPR005823">
    <property type="entry name" value="Ribosomal_uL13_bac-type"/>
</dbReference>
<dbReference type="InterPro" id="IPR023563">
    <property type="entry name" value="Ribosomal_uL13_CS"/>
</dbReference>
<dbReference type="InterPro" id="IPR036899">
    <property type="entry name" value="Ribosomal_uL13_sf"/>
</dbReference>
<dbReference type="NCBIfam" id="TIGR01066">
    <property type="entry name" value="rplM_bact"/>
    <property type="match status" value="1"/>
</dbReference>
<dbReference type="PANTHER" id="PTHR11545:SF2">
    <property type="entry name" value="LARGE RIBOSOMAL SUBUNIT PROTEIN UL13M"/>
    <property type="match status" value="1"/>
</dbReference>
<dbReference type="PANTHER" id="PTHR11545">
    <property type="entry name" value="RIBOSOMAL PROTEIN L13"/>
    <property type="match status" value="1"/>
</dbReference>
<dbReference type="Pfam" id="PF00572">
    <property type="entry name" value="Ribosomal_L13"/>
    <property type="match status" value="1"/>
</dbReference>
<dbReference type="PIRSF" id="PIRSF002181">
    <property type="entry name" value="Ribosomal_L13"/>
    <property type="match status" value="1"/>
</dbReference>
<dbReference type="SUPFAM" id="SSF52161">
    <property type="entry name" value="Ribosomal protein L13"/>
    <property type="match status" value="1"/>
</dbReference>
<dbReference type="PROSITE" id="PS00783">
    <property type="entry name" value="RIBOSOMAL_L13"/>
    <property type="match status" value="1"/>
</dbReference>
<proteinExistence type="inferred from homology"/>
<gene>
    <name evidence="1" type="primary">rplM</name>
    <name type="ordered locus">Amuc_1234</name>
</gene>
<sequence>MKTFSAKPQEVERKWYVIDAADKVLGRVAVEAANILRGKNKTIFTPHVDCGDFVIIVNADKVVLTGNKENAKIYTRFSGYVGGKQVDTPRKIRARRPELLLELAVKGMVPHTRLGRQQMTKLKVYAGASHPHEAQQPTAITL</sequence>
<accession>B2URH4</accession>
<keyword id="KW-1185">Reference proteome</keyword>
<keyword id="KW-0687">Ribonucleoprotein</keyword>
<keyword id="KW-0689">Ribosomal protein</keyword>
<reference key="1">
    <citation type="journal article" date="2011" name="PLoS ONE">
        <title>The genome of Akkermansia muciniphila, a dedicated intestinal mucin degrader, and its use in exploring intestinal metagenomes.</title>
        <authorList>
            <person name="van Passel M.W."/>
            <person name="Kant R."/>
            <person name="Zoetendal E.G."/>
            <person name="Plugge C.M."/>
            <person name="Derrien M."/>
            <person name="Malfatti S.A."/>
            <person name="Chain P.S."/>
            <person name="Woyke T."/>
            <person name="Palva A."/>
            <person name="de Vos W.M."/>
            <person name="Smidt H."/>
        </authorList>
    </citation>
    <scope>NUCLEOTIDE SEQUENCE [LARGE SCALE GENOMIC DNA]</scope>
    <source>
        <strain>ATCC BAA-835 / DSM 22959 / JCM 33894 / BCRC 81048 / CCUG 64013 / CIP 107961 / Muc</strain>
    </source>
</reference>
<name>RL13_AKKM8</name>
<organism>
    <name type="scientific">Akkermansia muciniphila (strain ATCC BAA-835 / DSM 22959 / JCM 33894 / BCRC 81048 / CCUG 64013 / CIP 107961 / Muc)</name>
    <dbReference type="NCBI Taxonomy" id="349741"/>
    <lineage>
        <taxon>Bacteria</taxon>
        <taxon>Pseudomonadati</taxon>
        <taxon>Verrucomicrobiota</taxon>
        <taxon>Verrucomicrobiia</taxon>
        <taxon>Verrucomicrobiales</taxon>
        <taxon>Akkermansiaceae</taxon>
        <taxon>Akkermansia</taxon>
    </lineage>
</organism>
<protein>
    <recommendedName>
        <fullName evidence="1">Large ribosomal subunit protein uL13</fullName>
    </recommendedName>
    <alternativeName>
        <fullName evidence="2">50S ribosomal protein L13</fullName>
    </alternativeName>
</protein>
<evidence type="ECO:0000255" key="1">
    <source>
        <dbReference type="HAMAP-Rule" id="MF_01366"/>
    </source>
</evidence>
<evidence type="ECO:0000305" key="2"/>
<comment type="function">
    <text evidence="1">This protein is one of the early assembly proteins of the 50S ribosomal subunit, although it is not seen to bind rRNA by itself. It is important during the early stages of 50S assembly.</text>
</comment>
<comment type="subunit">
    <text evidence="1">Part of the 50S ribosomal subunit.</text>
</comment>
<comment type="similarity">
    <text evidence="1">Belongs to the universal ribosomal protein uL13 family.</text>
</comment>
<feature type="chain" id="PRO_1000144084" description="Large ribosomal subunit protein uL13">
    <location>
        <begin position="1"/>
        <end position="142"/>
    </location>
</feature>